<reference key="1">
    <citation type="journal article" date="2008" name="J. Biotechnol.">
        <title>The genome of Xanthomonas campestris pv. campestris B100 and its use for the reconstruction of metabolic pathways involved in xanthan biosynthesis.</title>
        <authorList>
            <person name="Vorhoelter F.-J."/>
            <person name="Schneiker S."/>
            <person name="Goesmann A."/>
            <person name="Krause L."/>
            <person name="Bekel T."/>
            <person name="Kaiser O."/>
            <person name="Linke B."/>
            <person name="Patschkowski T."/>
            <person name="Rueckert C."/>
            <person name="Schmid J."/>
            <person name="Sidhu V.K."/>
            <person name="Sieber V."/>
            <person name="Tauch A."/>
            <person name="Watt S.A."/>
            <person name="Weisshaar B."/>
            <person name="Becker A."/>
            <person name="Niehaus K."/>
            <person name="Puehler A."/>
        </authorList>
    </citation>
    <scope>NUCLEOTIDE SEQUENCE [LARGE SCALE GENOMIC DNA]</scope>
    <source>
        <strain>B100</strain>
    </source>
</reference>
<keyword id="KW-0456">Lyase</keyword>
<keyword id="KW-0501">Molybdenum cofactor biosynthesis</keyword>
<organism>
    <name type="scientific">Xanthomonas campestris pv. campestris (strain B100)</name>
    <dbReference type="NCBI Taxonomy" id="509169"/>
    <lineage>
        <taxon>Bacteria</taxon>
        <taxon>Pseudomonadati</taxon>
        <taxon>Pseudomonadota</taxon>
        <taxon>Gammaproteobacteria</taxon>
        <taxon>Lysobacterales</taxon>
        <taxon>Lysobacteraceae</taxon>
        <taxon>Xanthomonas</taxon>
    </lineage>
</organism>
<evidence type="ECO:0000255" key="1">
    <source>
        <dbReference type="HAMAP-Rule" id="MF_01224"/>
    </source>
</evidence>
<sequence length="165" mass="17511">MPAKTTSARLTHLDDAGLPTMVDVSDKQVTARSATAESRVHFPAAVAAQLRANGLRSAKGGIVETAVIAGTMAVKRTHELIPFCHPLPIDGCRFEIDWAGAHVLQIVCTVRCVHRTGVEMEALTGASVAALTVYDMCKALSHSMRIGPTKLLSKRGGKRDIGAAR</sequence>
<accession>B0RTD8</accession>
<comment type="function">
    <text evidence="1">Catalyzes the conversion of (8S)-3',8-cyclo-7,8-dihydroguanosine 5'-triphosphate to cyclic pyranopterin monophosphate (cPMP).</text>
</comment>
<comment type="catalytic activity">
    <reaction evidence="1">
        <text>(8S)-3',8-cyclo-7,8-dihydroguanosine 5'-triphosphate = cyclic pyranopterin phosphate + diphosphate</text>
        <dbReference type="Rhea" id="RHEA:49580"/>
        <dbReference type="ChEBI" id="CHEBI:33019"/>
        <dbReference type="ChEBI" id="CHEBI:59648"/>
        <dbReference type="ChEBI" id="CHEBI:131766"/>
        <dbReference type="EC" id="4.6.1.17"/>
    </reaction>
</comment>
<comment type="pathway">
    <text evidence="1">Cofactor biosynthesis; molybdopterin biosynthesis.</text>
</comment>
<comment type="subunit">
    <text evidence="1">Homohexamer; trimer of dimers.</text>
</comment>
<comment type="similarity">
    <text evidence="1">Belongs to the MoaC family.</text>
</comment>
<proteinExistence type="inferred from homology"/>
<dbReference type="EC" id="4.6.1.17" evidence="1"/>
<dbReference type="EMBL" id="AM920689">
    <property type="protein sequence ID" value="CAP52727.1"/>
    <property type="molecule type" value="Genomic_DNA"/>
</dbReference>
<dbReference type="SMR" id="B0RTD8"/>
<dbReference type="KEGG" id="xca:xcc-b100_3362"/>
<dbReference type="HOGENOM" id="CLU_074693_1_0_6"/>
<dbReference type="UniPathway" id="UPA00344"/>
<dbReference type="Proteomes" id="UP000001188">
    <property type="component" value="Chromosome"/>
</dbReference>
<dbReference type="GO" id="GO:0061799">
    <property type="term" value="F:cyclic pyranopterin monophosphate synthase activity"/>
    <property type="evidence" value="ECO:0007669"/>
    <property type="project" value="UniProtKB-UniRule"/>
</dbReference>
<dbReference type="GO" id="GO:0006777">
    <property type="term" value="P:Mo-molybdopterin cofactor biosynthetic process"/>
    <property type="evidence" value="ECO:0007669"/>
    <property type="project" value="UniProtKB-UniRule"/>
</dbReference>
<dbReference type="CDD" id="cd01420">
    <property type="entry name" value="MoaC_PE"/>
    <property type="match status" value="1"/>
</dbReference>
<dbReference type="Gene3D" id="3.30.70.640">
    <property type="entry name" value="Molybdopterin cofactor biosynthesis C (MoaC) domain"/>
    <property type="match status" value="1"/>
</dbReference>
<dbReference type="HAMAP" id="MF_01224_B">
    <property type="entry name" value="MoaC_B"/>
    <property type="match status" value="1"/>
</dbReference>
<dbReference type="InterPro" id="IPR023045">
    <property type="entry name" value="MoaC"/>
</dbReference>
<dbReference type="InterPro" id="IPR047594">
    <property type="entry name" value="MoaC_bact/euk"/>
</dbReference>
<dbReference type="InterPro" id="IPR036522">
    <property type="entry name" value="MoaC_sf"/>
</dbReference>
<dbReference type="InterPro" id="IPR002820">
    <property type="entry name" value="Mopterin_CF_biosynth-C_dom"/>
</dbReference>
<dbReference type="NCBIfam" id="TIGR00581">
    <property type="entry name" value="moaC"/>
    <property type="match status" value="1"/>
</dbReference>
<dbReference type="NCBIfam" id="NF006870">
    <property type="entry name" value="PRK09364.1"/>
    <property type="match status" value="1"/>
</dbReference>
<dbReference type="Pfam" id="PF01967">
    <property type="entry name" value="MoaC"/>
    <property type="match status" value="1"/>
</dbReference>
<dbReference type="SUPFAM" id="SSF55040">
    <property type="entry name" value="Molybdenum cofactor biosynthesis protein C, MoaC"/>
    <property type="match status" value="1"/>
</dbReference>
<protein>
    <recommendedName>
        <fullName evidence="1">Cyclic pyranopterin monophosphate synthase</fullName>
        <ecNumber evidence="1">4.6.1.17</ecNumber>
    </recommendedName>
    <alternativeName>
        <fullName evidence="1">Molybdenum cofactor biosynthesis protein C</fullName>
    </alternativeName>
</protein>
<name>MOAC_XANCB</name>
<feature type="chain" id="PRO_1000139306" description="Cyclic pyranopterin monophosphate synthase">
    <location>
        <begin position="1"/>
        <end position="165"/>
    </location>
</feature>
<feature type="active site" evidence="1">
    <location>
        <position position="135"/>
    </location>
</feature>
<feature type="binding site" evidence="1">
    <location>
        <begin position="83"/>
        <end position="85"/>
    </location>
    <ligand>
        <name>substrate</name>
    </ligand>
</feature>
<feature type="binding site" evidence="1">
    <location>
        <begin position="120"/>
        <end position="121"/>
    </location>
    <ligand>
        <name>substrate</name>
    </ligand>
</feature>
<gene>
    <name evidence="1" type="primary">moaC</name>
    <name type="ordered locus">xcc-b100_3362</name>
</gene>